<gene>
    <name evidence="1" type="primary">rplY</name>
    <name evidence="1" type="synonym">ctc</name>
    <name type="ordered locus">SAR11_0095</name>
</gene>
<accession>Q4FPH0</accession>
<feature type="chain" id="PRO_0000244222" description="Large ribosomal subunit protein bL25">
    <location>
        <begin position="1"/>
        <end position="228"/>
    </location>
</feature>
<feature type="region of interest" description="Disordered" evidence="2">
    <location>
        <begin position="1"/>
        <end position="20"/>
    </location>
</feature>
<feature type="region of interest" description="Disordered" evidence="2">
    <location>
        <begin position="187"/>
        <end position="228"/>
    </location>
</feature>
<feature type="compositionally biased region" description="Polar residues" evidence="2">
    <location>
        <begin position="1"/>
        <end position="10"/>
    </location>
</feature>
<feature type="compositionally biased region" description="Basic and acidic residues" evidence="2">
    <location>
        <begin position="202"/>
        <end position="228"/>
    </location>
</feature>
<dbReference type="EMBL" id="CP000084">
    <property type="protein sequence ID" value="AAZ20919.1"/>
    <property type="molecule type" value="Genomic_DNA"/>
</dbReference>
<dbReference type="RefSeq" id="WP_011281467.1">
    <property type="nucleotide sequence ID" value="NC_007205.1"/>
</dbReference>
<dbReference type="SMR" id="Q4FPH0"/>
<dbReference type="STRING" id="335992.SAR11_0095"/>
<dbReference type="GeneID" id="66294597"/>
<dbReference type="KEGG" id="pub:SAR11_0095"/>
<dbReference type="eggNOG" id="COG1825">
    <property type="taxonomic scope" value="Bacteria"/>
</dbReference>
<dbReference type="HOGENOM" id="CLU_075939_0_0_5"/>
<dbReference type="OrthoDB" id="9806411at2"/>
<dbReference type="Proteomes" id="UP000002528">
    <property type="component" value="Chromosome"/>
</dbReference>
<dbReference type="GO" id="GO:0022625">
    <property type="term" value="C:cytosolic large ribosomal subunit"/>
    <property type="evidence" value="ECO:0007669"/>
    <property type="project" value="TreeGrafter"/>
</dbReference>
<dbReference type="GO" id="GO:0008097">
    <property type="term" value="F:5S rRNA binding"/>
    <property type="evidence" value="ECO:0007669"/>
    <property type="project" value="InterPro"/>
</dbReference>
<dbReference type="GO" id="GO:0003735">
    <property type="term" value="F:structural constituent of ribosome"/>
    <property type="evidence" value="ECO:0007669"/>
    <property type="project" value="InterPro"/>
</dbReference>
<dbReference type="GO" id="GO:0006412">
    <property type="term" value="P:translation"/>
    <property type="evidence" value="ECO:0007669"/>
    <property type="project" value="UniProtKB-UniRule"/>
</dbReference>
<dbReference type="CDD" id="cd00495">
    <property type="entry name" value="Ribosomal_L25_TL5_CTC"/>
    <property type="match status" value="1"/>
</dbReference>
<dbReference type="Gene3D" id="2.170.120.20">
    <property type="entry name" value="Ribosomal protein L25, beta domain"/>
    <property type="match status" value="1"/>
</dbReference>
<dbReference type="Gene3D" id="2.40.240.10">
    <property type="entry name" value="Ribosomal Protein L25, Chain P"/>
    <property type="match status" value="1"/>
</dbReference>
<dbReference type="HAMAP" id="MF_01334">
    <property type="entry name" value="Ribosomal_bL25_CTC"/>
    <property type="match status" value="1"/>
</dbReference>
<dbReference type="InterPro" id="IPR020056">
    <property type="entry name" value="Rbsml_bL25/Gln-tRNA_synth_N"/>
</dbReference>
<dbReference type="InterPro" id="IPR011035">
    <property type="entry name" value="Ribosomal_bL25/Gln-tRNA_synth"/>
</dbReference>
<dbReference type="InterPro" id="IPR020057">
    <property type="entry name" value="Ribosomal_bL25_b-dom"/>
</dbReference>
<dbReference type="InterPro" id="IPR037121">
    <property type="entry name" value="Ribosomal_bL25_C"/>
</dbReference>
<dbReference type="InterPro" id="IPR001021">
    <property type="entry name" value="Ribosomal_bL25_long"/>
</dbReference>
<dbReference type="InterPro" id="IPR029751">
    <property type="entry name" value="Ribosomal_L25_dom"/>
</dbReference>
<dbReference type="InterPro" id="IPR020930">
    <property type="entry name" value="Ribosomal_uL5_bac-type"/>
</dbReference>
<dbReference type="NCBIfam" id="TIGR00731">
    <property type="entry name" value="bL25_bact_ctc"/>
    <property type="match status" value="1"/>
</dbReference>
<dbReference type="NCBIfam" id="NF004128">
    <property type="entry name" value="PRK05618.1-2"/>
    <property type="match status" value="1"/>
</dbReference>
<dbReference type="PANTHER" id="PTHR33284">
    <property type="entry name" value="RIBOSOMAL PROTEIN L25/GLN-TRNA SYNTHETASE, ANTI-CODON-BINDING DOMAIN-CONTAINING PROTEIN"/>
    <property type="match status" value="1"/>
</dbReference>
<dbReference type="PANTHER" id="PTHR33284:SF1">
    <property type="entry name" value="RIBOSOMAL PROTEIN L25_GLN-TRNA SYNTHETASE, ANTI-CODON-BINDING DOMAIN-CONTAINING PROTEIN"/>
    <property type="match status" value="1"/>
</dbReference>
<dbReference type="Pfam" id="PF01386">
    <property type="entry name" value="Ribosomal_L25p"/>
    <property type="match status" value="1"/>
</dbReference>
<dbReference type="Pfam" id="PF14693">
    <property type="entry name" value="Ribosomal_TL5_C"/>
    <property type="match status" value="1"/>
</dbReference>
<dbReference type="SUPFAM" id="SSF50715">
    <property type="entry name" value="Ribosomal protein L25-like"/>
    <property type="match status" value="1"/>
</dbReference>
<protein>
    <recommendedName>
        <fullName evidence="1">Large ribosomal subunit protein bL25</fullName>
    </recommendedName>
    <alternativeName>
        <fullName evidence="3">50S ribosomal protein L25</fullName>
    </alternativeName>
    <alternativeName>
        <fullName evidence="1">General stress protein CTC</fullName>
    </alternativeName>
</protein>
<name>RL25_PELUB</name>
<reference key="1">
    <citation type="journal article" date="2005" name="Science">
        <title>Genome streamlining in a cosmopolitan oceanic bacterium.</title>
        <authorList>
            <person name="Giovannoni S.J."/>
            <person name="Tripp H.J."/>
            <person name="Givan S."/>
            <person name="Podar M."/>
            <person name="Vergin K.L."/>
            <person name="Baptista D."/>
            <person name="Bibbs L."/>
            <person name="Eads J."/>
            <person name="Richardson T.H."/>
            <person name="Noordewier M."/>
            <person name="Rappe M.S."/>
            <person name="Short J.M."/>
            <person name="Carrington J.C."/>
            <person name="Mathur E.J."/>
        </authorList>
    </citation>
    <scope>NUCLEOTIDE SEQUENCE [LARGE SCALE GENOMIC DNA]</scope>
    <source>
        <strain>HTCC1062</strain>
    </source>
</reference>
<sequence length="228" mass="24646">MNSLDANTRNTKSKGDVRSLRSAGNIPGIIYGGPDQNQKVTVLKKTLKSLIDKGSFLSNIITLNLDGKPQNVLPREITYNVISDEPTHIDFLRVVPGVKIRIEVPVVFINHETSPGLKRGGVLNIVRRKIELKCPSEKIPSAITIDLDGVDIGESFKISSVKLEEGVTPTIIGRDFVIATLAAPTVMKEPEKPAEAEAEAAEDGKEAAPAAEGDKKDDGEKKATEEKK</sequence>
<proteinExistence type="inferred from homology"/>
<organism>
    <name type="scientific">Pelagibacter ubique (strain HTCC1062)</name>
    <dbReference type="NCBI Taxonomy" id="335992"/>
    <lineage>
        <taxon>Bacteria</taxon>
        <taxon>Pseudomonadati</taxon>
        <taxon>Pseudomonadota</taxon>
        <taxon>Alphaproteobacteria</taxon>
        <taxon>Candidatus Pelagibacterales</taxon>
        <taxon>Candidatus Pelagibacteraceae</taxon>
        <taxon>Candidatus Pelagibacter</taxon>
    </lineage>
</organism>
<evidence type="ECO:0000255" key="1">
    <source>
        <dbReference type="HAMAP-Rule" id="MF_01334"/>
    </source>
</evidence>
<evidence type="ECO:0000256" key="2">
    <source>
        <dbReference type="SAM" id="MobiDB-lite"/>
    </source>
</evidence>
<evidence type="ECO:0000305" key="3"/>
<comment type="function">
    <text evidence="1">This is one of the proteins that binds to the 5S RNA in the ribosome where it forms part of the central protuberance.</text>
</comment>
<comment type="subunit">
    <text evidence="1">Part of the 50S ribosomal subunit; part of the 5S rRNA/L5/L18/L25 subcomplex. Contacts the 5S rRNA. Binds to the 5S rRNA independently of L5 and L18.</text>
</comment>
<comment type="similarity">
    <text evidence="1">Belongs to the bacterial ribosomal protein bL25 family. CTC subfamily.</text>
</comment>
<keyword id="KW-1185">Reference proteome</keyword>
<keyword id="KW-0687">Ribonucleoprotein</keyword>
<keyword id="KW-0689">Ribosomal protein</keyword>
<keyword id="KW-0694">RNA-binding</keyword>
<keyword id="KW-0699">rRNA-binding</keyword>